<comment type="function">
    <text evidence="3">Involved in the biosynthesis of D-psicose. Catalyzes the reversible epimerization of D-fructose at the C3 position to yield D-psicose. The enzyme is highly specific for D-psicose and shows very low activity with D-tagatose. The substrate specificity decreases in the following order: D-fructose, D-tagatose, D-ribulose, D-xylulose, and D-sorbose. It shows a higher level of activity for cis ketoses than for trans-ketoses.</text>
</comment>
<comment type="catalytic activity">
    <reaction evidence="3">
        <text>D-allulose = keto-D-fructose</text>
        <dbReference type="Rhea" id="RHEA:42360"/>
        <dbReference type="ChEBI" id="CHEBI:27605"/>
        <dbReference type="ChEBI" id="CHEBI:48095"/>
        <dbReference type="EC" id="5.1.3.30"/>
    </reaction>
</comment>
<comment type="cofactor">
    <cofactor evidence="3 4">
        <name>Mn(2+)</name>
        <dbReference type="ChEBI" id="CHEBI:29035"/>
    </cofactor>
    <cofactor evidence="3">
        <name>Co(2+)</name>
        <dbReference type="ChEBI" id="CHEBI:48828"/>
    </cofactor>
    <text evidence="3 4">Binds 1 Mn(2+) or Co(2+) ion per subunit.</text>
</comment>
<comment type="activity regulation">
    <text evidence="3">Inhibited by Zn(2+) and Cu(2+).</text>
</comment>
<comment type="biophysicochemical properties">
    <kinetics>
        <KM evidence="3">12 mM for D-psicose (at pH 8 and 50 degrees Celsius)</KM>
        <KM evidence="3">762 mM for D-tagatose (at pH 8 and 50 degrees Celsius)</KM>
        <text evidence="3">kcat is 2381 min(-1) for epimerase activity with D-psicose as substrate (at pH 8 and 50 degrees Celsius). kcat is 270 min(-1) for epimerase activity with D-tagatose as substrate (at pH 8 and 50 degrees Celsius).</text>
    </kinetics>
    <phDependence>
        <text evidence="3">Optimum pH is 8.</text>
    </phDependence>
    <temperatureDependence>
        <text evidence="3">Optimum temperature is 50 degrees Celsius. The activity of D-psicose 3-epimerase is very stable below 45 degrees Celsius but decreases above 50 degrees Celsius with increasing reaction time.</text>
    </temperatureDependence>
</comment>
<comment type="subunit">
    <text evidence="3 4">Homotetramer.</text>
</comment>
<comment type="similarity">
    <text evidence="6">Belongs to the hyi family.</text>
</comment>
<dbReference type="EC" id="5.1.3.30" evidence="3"/>
<dbReference type="EMBL" id="AE007870">
    <property type="protein sequence ID" value="AAK88700.1"/>
    <property type="molecule type" value="Genomic_DNA"/>
</dbReference>
<dbReference type="PIR" id="AB3141">
    <property type="entry name" value="AB3141"/>
</dbReference>
<dbReference type="PIR" id="B98147">
    <property type="entry name" value="B98147"/>
</dbReference>
<dbReference type="RefSeq" id="NP_355915.1">
    <property type="nucleotide sequence ID" value="NC_003063.2"/>
</dbReference>
<dbReference type="RefSeq" id="WP_010974125.1">
    <property type="nucleotide sequence ID" value="NC_003063.2"/>
</dbReference>
<dbReference type="PDB" id="2HK0">
    <property type="method" value="X-ray"/>
    <property type="resolution" value="2.00 A"/>
    <property type="chains" value="A/B/C/D=1-289"/>
</dbReference>
<dbReference type="PDB" id="2HK1">
    <property type="method" value="X-ray"/>
    <property type="resolution" value="2.30 A"/>
    <property type="chains" value="A/B/C/D=1-289"/>
</dbReference>
<dbReference type="PDBsum" id="2HK0"/>
<dbReference type="PDBsum" id="2HK1"/>
<dbReference type="SMR" id="A9CH28"/>
<dbReference type="STRING" id="176299.Atu4750"/>
<dbReference type="EnsemblBacteria" id="AAK88700">
    <property type="protein sequence ID" value="AAK88700"/>
    <property type="gene ID" value="Atu4750"/>
</dbReference>
<dbReference type="GeneID" id="1136624"/>
<dbReference type="KEGG" id="atu:Atu4750"/>
<dbReference type="PATRIC" id="fig|176299.10.peg.4557"/>
<dbReference type="eggNOG" id="COG1082">
    <property type="taxonomic scope" value="Bacteria"/>
</dbReference>
<dbReference type="HOGENOM" id="CLU_050006_8_2_5"/>
<dbReference type="OrthoDB" id="9801426at2"/>
<dbReference type="PhylomeDB" id="A9CH28"/>
<dbReference type="BioCyc" id="AGRO:ATU4750-MONOMER"/>
<dbReference type="BioCyc" id="MetaCyc:MONOMER-17958"/>
<dbReference type="BRENDA" id="5.1.3.B12">
    <property type="organism ID" value="200"/>
</dbReference>
<dbReference type="EvolutionaryTrace" id="A9CH28"/>
<dbReference type="Proteomes" id="UP000000813">
    <property type="component" value="Chromosome linear"/>
</dbReference>
<dbReference type="GO" id="GO:0050897">
    <property type="term" value="F:cobalt ion binding"/>
    <property type="evidence" value="ECO:0000314"/>
    <property type="project" value="UniProtKB"/>
</dbReference>
<dbReference type="GO" id="GO:0030145">
    <property type="term" value="F:manganese ion binding"/>
    <property type="evidence" value="ECO:0000314"/>
    <property type="project" value="UniProtKB"/>
</dbReference>
<dbReference type="GO" id="GO:0016857">
    <property type="term" value="F:racemase and epimerase activity, acting on carbohydrates and derivatives"/>
    <property type="evidence" value="ECO:0000314"/>
    <property type="project" value="UniProtKB"/>
</dbReference>
<dbReference type="FunFam" id="3.20.20.150:FF:000022">
    <property type="entry name" value="D-psicose 3-epimerase"/>
    <property type="match status" value="1"/>
</dbReference>
<dbReference type="Gene3D" id="3.20.20.150">
    <property type="entry name" value="Divalent-metal-dependent TIM barrel enzymes"/>
    <property type="match status" value="1"/>
</dbReference>
<dbReference type="InterPro" id="IPR050312">
    <property type="entry name" value="IolE/XylAMocC-like"/>
</dbReference>
<dbReference type="InterPro" id="IPR036237">
    <property type="entry name" value="Xyl_isomerase-like_sf"/>
</dbReference>
<dbReference type="InterPro" id="IPR013022">
    <property type="entry name" value="Xyl_isomerase-like_TIM-brl"/>
</dbReference>
<dbReference type="PANTHER" id="PTHR12110">
    <property type="entry name" value="HYDROXYPYRUVATE ISOMERASE"/>
    <property type="match status" value="1"/>
</dbReference>
<dbReference type="PANTHER" id="PTHR12110:SF41">
    <property type="entry name" value="INOSOSE DEHYDRATASE"/>
    <property type="match status" value="1"/>
</dbReference>
<dbReference type="Pfam" id="PF01261">
    <property type="entry name" value="AP_endonuc_2"/>
    <property type="match status" value="1"/>
</dbReference>
<dbReference type="SUPFAM" id="SSF51658">
    <property type="entry name" value="Xylose isomerase-like"/>
    <property type="match status" value="1"/>
</dbReference>
<proteinExistence type="evidence at protein level"/>
<organism>
    <name type="scientific">Agrobacterium fabrum (strain C58 / ATCC 33970)</name>
    <name type="common">Agrobacterium tumefaciens (strain C58)</name>
    <dbReference type="NCBI Taxonomy" id="176299"/>
    <lineage>
        <taxon>Bacteria</taxon>
        <taxon>Pseudomonadati</taxon>
        <taxon>Pseudomonadota</taxon>
        <taxon>Alphaproteobacteria</taxon>
        <taxon>Hyphomicrobiales</taxon>
        <taxon>Rhizobiaceae</taxon>
        <taxon>Rhizobium/Agrobacterium group</taxon>
        <taxon>Agrobacterium</taxon>
        <taxon>Agrobacterium tumefaciens complex</taxon>
    </lineage>
</organism>
<keyword id="KW-0002">3D-structure</keyword>
<keyword id="KW-0170">Cobalt</keyword>
<keyword id="KW-0413">Isomerase</keyword>
<keyword id="KW-0464">Manganese</keyword>
<keyword id="KW-0479">Metal-binding</keyword>
<keyword id="KW-1185">Reference proteome</keyword>
<feature type="chain" id="PRO_0000435451" description="D-psicose 3-epimerase">
    <location>
        <begin position="1"/>
        <end position="289"/>
    </location>
</feature>
<feature type="active site" description="Proton donor/acceptor" evidence="2">
    <location>
        <position position="150"/>
    </location>
</feature>
<feature type="active site" description="Proton donor/acceptor" evidence="2">
    <location>
        <position position="244"/>
    </location>
</feature>
<feature type="binding site" evidence="1">
    <location>
        <position position="6"/>
    </location>
    <ligand>
        <name>substrate</name>
    </ligand>
</feature>
<feature type="binding site" evidence="4">
    <location>
        <position position="107"/>
    </location>
    <ligand>
        <name>substrate</name>
    </ligand>
</feature>
<feature type="binding site" evidence="4">
    <location>
        <position position="150"/>
    </location>
    <ligand>
        <name>Mn(2+)</name>
        <dbReference type="ChEBI" id="CHEBI:29035"/>
    </ligand>
</feature>
<feature type="binding site" evidence="4">
    <location>
        <position position="156"/>
    </location>
    <ligand>
        <name>substrate</name>
    </ligand>
</feature>
<feature type="binding site" evidence="4">
    <location>
        <begin position="183"/>
        <end position="186"/>
    </location>
    <ligand>
        <name>substrate</name>
    </ligand>
</feature>
<feature type="binding site" evidence="4">
    <location>
        <position position="183"/>
    </location>
    <ligand>
        <name>Mn(2+)</name>
        <dbReference type="ChEBI" id="CHEBI:29035"/>
    </ligand>
</feature>
<feature type="binding site" evidence="4">
    <location>
        <position position="209"/>
    </location>
    <ligand>
        <name>Mn(2+)</name>
        <dbReference type="ChEBI" id="CHEBI:29035"/>
    </ligand>
</feature>
<feature type="binding site" evidence="4">
    <location>
        <position position="215"/>
    </location>
    <ligand>
        <name>substrate</name>
    </ligand>
</feature>
<feature type="binding site" evidence="4">
    <location>
        <position position="244"/>
    </location>
    <ligand>
        <name>Mn(2+)</name>
        <dbReference type="ChEBI" id="CHEBI:29035"/>
    </ligand>
</feature>
<feature type="strand" evidence="7">
    <location>
        <begin position="2"/>
        <end position="6"/>
    </location>
</feature>
<feature type="helix" evidence="7">
    <location>
        <begin position="7"/>
        <end position="10"/>
    </location>
</feature>
<feature type="helix" evidence="7">
    <location>
        <begin position="21"/>
        <end position="27"/>
    </location>
</feature>
<feature type="strand" evidence="7">
    <location>
        <begin position="31"/>
        <end position="36"/>
    </location>
</feature>
<feature type="helix" evidence="7">
    <location>
        <begin position="37"/>
        <end position="40"/>
    </location>
</feature>
<feature type="helix" evidence="7">
    <location>
        <begin position="45"/>
        <end position="57"/>
    </location>
</feature>
<feature type="strand" evidence="7">
    <location>
        <begin position="61"/>
        <end position="65"/>
    </location>
</feature>
<feature type="strand" evidence="7">
    <location>
        <begin position="70"/>
        <end position="72"/>
    </location>
</feature>
<feature type="helix" evidence="7">
    <location>
        <begin position="79"/>
        <end position="98"/>
    </location>
</feature>
<feature type="strand" evidence="7">
    <location>
        <begin position="103"/>
        <end position="106"/>
    </location>
</feature>
<feature type="helix" evidence="7">
    <location>
        <begin position="122"/>
        <end position="142"/>
    </location>
</feature>
<feature type="strand" evidence="7">
    <location>
        <begin position="146"/>
        <end position="150"/>
    </location>
</feature>
<feature type="turn" evidence="7">
    <location>
        <begin position="154"/>
        <end position="156"/>
    </location>
</feature>
<feature type="helix" evidence="7">
    <location>
        <begin position="163"/>
        <end position="173"/>
    </location>
</feature>
<feature type="strand" evidence="7">
    <location>
        <begin position="178"/>
        <end position="183"/>
    </location>
</feature>
<feature type="helix" evidence="7">
    <location>
        <begin position="184"/>
        <end position="190"/>
    </location>
</feature>
<feature type="helix" evidence="7">
    <location>
        <begin position="194"/>
        <end position="201"/>
    </location>
</feature>
<feature type="helix" evidence="7">
    <location>
        <begin position="202"/>
        <end position="204"/>
    </location>
</feature>
<feature type="strand" evidence="7">
    <location>
        <begin position="205"/>
        <end position="210"/>
    </location>
</feature>
<feature type="helix" evidence="7">
    <location>
        <begin position="225"/>
        <end position="234"/>
    </location>
</feature>
<feature type="strand" evidence="7">
    <location>
        <begin position="239"/>
        <end position="243"/>
    </location>
</feature>
<feature type="helix" evidence="7">
    <location>
        <begin position="251"/>
        <end position="256"/>
    </location>
</feature>
<feature type="strand" evidence="8">
    <location>
        <begin position="264"/>
        <end position="266"/>
    </location>
</feature>
<feature type="helix" evidence="7">
    <location>
        <begin position="269"/>
        <end position="287"/>
    </location>
</feature>
<accession>A9CH28</accession>
<protein>
    <recommendedName>
        <fullName evidence="5">D-psicose 3-epimerase</fullName>
        <shortName evidence="5">DPEase</shortName>
        <ecNumber evidence="3">5.1.3.30</ecNumber>
    </recommendedName>
</protein>
<name>DPES_AGRFC</name>
<reference key="1">
    <citation type="journal article" date="2001" name="Science">
        <title>The genome of the natural genetic engineer Agrobacterium tumefaciens C58.</title>
        <authorList>
            <person name="Wood D.W."/>
            <person name="Setubal J.C."/>
            <person name="Kaul R."/>
            <person name="Monks D.E."/>
            <person name="Kitajima J.P."/>
            <person name="Okura V.K."/>
            <person name="Zhou Y."/>
            <person name="Chen L."/>
            <person name="Wood G.E."/>
            <person name="Almeida N.F. Jr."/>
            <person name="Woo L."/>
            <person name="Chen Y."/>
            <person name="Paulsen I.T."/>
            <person name="Eisen J.A."/>
            <person name="Karp P.D."/>
            <person name="Bovee D. Sr."/>
            <person name="Chapman P."/>
            <person name="Clendenning J."/>
            <person name="Deatherage G."/>
            <person name="Gillet W."/>
            <person name="Grant C."/>
            <person name="Kutyavin T."/>
            <person name="Levy R."/>
            <person name="Li M.-J."/>
            <person name="McClelland E."/>
            <person name="Palmieri A."/>
            <person name="Raymond C."/>
            <person name="Rouse G."/>
            <person name="Saenphimmachak C."/>
            <person name="Wu Z."/>
            <person name="Romero P."/>
            <person name="Gordon D."/>
            <person name="Zhang S."/>
            <person name="Yoo H."/>
            <person name="Tao Y."/>
            <person name="Biddle P."/>
            <person name="Jung M."/>
            <person name="Krespan W."/>
            <person name="Perry M."/>
            <person name="Gordon-Kamm B."/>
            <person name="Liao L."/>
            <person name="Kim S."/>
            <person name="Hendrick C."/>
            <person name="Zhao Z.-Y."/>
            <person name="Dolan M."/>
            <person name="Chumley F."/>
            <person name="Tingey S.V."/>
            <person name="Tomb J.-F."/>
            <person name="Gordon M.P."/>
            <person name="Olson M.V."/>
            <person name="Nester E.W."/>
        </authorList>
    </citation>
    <scope>NUCLEOTIDE SEQUENCE [LARGE SCALE GENOMIC DNA]</scope>
    <source>
        <strain>C58 / ATCC 33970</strain>
    </source>
</reference>
<reference key="2">
    <citation type="journal article" date="2001" name="Science">
        <title>Genome sequence of the plant pathogen and biotechnology agent Agrobacterium tumefaciens C58.</title>
        <authorList>
            <person name="Goodner B."/>
            <person name="Hinkle G."/>
            <person name="Gattung S."/>
            <person name="Miller N."/>
            <person name="Blanchard M."/>
            <person name="Qurollo B."/>
            <person name="Goldman B.S."/>
            <person name="Cao Y."/>
            <person name="Askenazi M."/>
            <person name="Halling C."/>
            <person name="Mullin L."/>
            <person name="Houmiel K."/>
            <person name="Gordon J."/>
            <person name="Vaudin M."/>
            <person name="Iartchouk O."/>
            <person name="Epp A."/>
            <person name="Liu F."/>
            <person name="Wollam C."/>
            <person name="Allinger M."/>
            <person name="Doughty D."/>
            <person name="Scott C."/>
            <person name="Lappas C."/>
            <person name="Markelz B."/>
            <person name="Flanagan C."/>
            <person name="Crowell C."/>
            <person name="Gurson J."/>
            <person name="Lomo C."/>
            <person name="Sear C."/>
            <person name="Strub G."/>
            <person name="Cielo C."/>
            <person name="Slater S."/>
        </authorList>
    </citation>
    <scope>NUCLEOTIDE SEQUENCE [LARGE SCALE GENOMIC DNA]</scope>
    <source>
        <strain>C58 / ATCC 33970</strain>
    </source>
</reference>
<reference key="3">
    <citation type="journal article" date="2006" name="Appl. Environ. Microbiol.">
        <title>Characterization of an Agrobacterium tumefaciens D-psicose 3-epimerase that converts D-fructose to D-psicose.</title>
        <authorList>
            <person name="Kim H.J."/>
            <person name="Hyun E.K."/>
            <person name="Kim Y.S."/>
            <person name="Lee Y.J."/>
            <person name="Oh D.K."/>
        </authorList>
    </citation>
    <scope>FUNCTION</scope>
    <scope>CATALYTIC ACTIVITY</scope>
    <scope>BIOPHYSICOCHEMICAL PROPERTIES</scope>
    <scope>ACTIVITY REGULATION</scope>
    <scope>SUBSTRATE SPECIFICITY</scope>
    <scope>COFACTOR</scope>
    <scope>SUBUNIT</scope>
</reference>
<reference key="4">
    <citation type="journal article" date="2006" name="J. Mol. Biol.">
        <title>Crystal structure of D-psicose 3-epimerase from Agrobacterium tumefaciens and its complex with true substrate D-fructose: a pivotal role of metal in catalysis, an active site for the non-phosphorylated substrate, and its conformational changes.</title>
        <authorList>
            <person name="Kim K."/>
            <person name="Kim H.J."/>
            <person name="Oh D.K."/>
            <person name="Cha S.S."/>
            <person name="Rhee S."/>
        </authorList>
    </citation>
    <scope>X-RAY CRYSTALLOGRAPHY (2.00 ANGSTROMS) IN COMPLEX WITH SUBSTRATE ANALOG AND MANGANESE ION</scope>
    <scope>COFACTOR</scope>
    <scope>SUBUNIT</scope>
</reference>
<gene>
    <name type="primary">dpe</name>
    <name type="ordered locus">Atu4750</name>
</gene>
<sequence>MKHGIYYSYWEHEWSAKFGPYIEKVAKLGFDIIEVAAHHINEYSDAELATIRKSAKDNGIILTAGIGPSKTKNLSSEDAAVRAAGKAFFERTLSNVAKLDIHTIGGALHSYWPIDYSQPVDKAGDYARGVEGINGIADFANDLGINLCIEVLNRFENHVLNTAAEGVAFVKDVGKNNVKVMLDTFHMNIEEDSFGDAIRTAGPLLGHFHTGESNRRVPGKGRMPWHEIGLALRDINYTGAVIMEPFVKTGGTIGSDIKVWRDLSGGADIAKMDEDARNALAFSRFVLGG</sequence>
<evidence type="ECO:0000250" key="1">
    <source>
        <dbReference type="UniProtKB" id="B8I944"/>
    </source>
</evidence>
<evidence type="ECO:0000250" key="2">
    <source>
        <dbReference type="UniProtKB" id="Q9WYP7"/>
    </source>
</evidence>
<evidence type="ECO:0000269" key="3">
    <source>
    </source>
</evidence>
<evidence type="ECO:0000269" key="4">
    <source>
    </source>
</evidence>
<evidence type="ECO:0000303" key="5">
    <source>
    </source>
</evidence>
<evidence type="ECO:0000305" key="6"/>
<evidence type="ECO:0007829" key="7">
    <source>
        <dbReference type="PDB" id="2HK0"/>
    </source>
</evidence>
<evidence type="ECO:0007829" key="8">
    <source>
        <dbReference type="PDB" id="2HK1"/>
    </source>
</evidence>